<reference key="1">
    <citation type="journal article" date="2009" name="PLoS Genet.">
        <title>Organised genome dynamics in the Escherichia coli species results in highly diverse adaptive paths.</title>
        <authorList>
            <person name="Touchon M."/>
            <person name="Hoede C."/>
            <person name="Tenaillon O."/>
            <person name="Barbe V."/>
            <person name="Baeriswyl S."/>
            <person name="Bidet P."/>
            <person name="Bingen E."/>
            <person name="Bonacorsi S."/>
            <person name="Bouchier C."/>
            <person name="Bouvet O."/>
            <person name="Calteau A."/>
            <person name="Chiapello H."/>
            <person name="Clermont O."/>
            <person name="Cruveiller S."/>
            <person name="Danchin A."/>
            <person name="Diard M."/>
            <person name="Dossat C."/>
            <person name="Karoui M.E."/>
            <person name="Frapy E."/>
            <person name="Garry L."/>
            <person name="Ghigo J.M."/>
            <person name="Gilles A.M."/>
            <person name="Johnson J."/>
            <person name="Le Bouguenec C."/>
            <person name="Lescat M."/>
            <person name="Mangenot S."/>
            <person name="Martinez-Jehanne V."/>
            <person name="Matic I."/>
            <person name="Nassif X."/>
            <person name="Oztas S."/>
            <person name="Petit M.A."/>
            <person name="Pichon C."/>
            <person name="Rouy Z."/>
            <person name="Ruf C.S."/>
            <person name="Schneider D."/>
            <person name="Tourret J."/>
            <person name="Vacherie B."/>
            <person name="Vallenet D."/>
            <person name="Medigue C."/>
            <person name="Rocha E.P.C."/>
            <person name="Denamur E."/>
        </authorList>
    </citation>
    <scope>NUCLEOTIDE SEQUENCE [LARGE SCALE GENOMIC DNA]</scope>
    <source>
        <strain>UMN026 / ExPEC</strain>
    </source>
</reference>
<sequence length="197" mass="21812">MSSKEQKTPEGQAPEEIIMDQHEEIEAVEPEASAEQVDPRDEKIANLEAQLAEAQTRERDGILRVKAEMENLRRRTELDIEKAHKFALEKFINELLPVIDSLDRALEVADKANPDMSAMVEGIELTLKSMLDVVRKFGVEVIAETNVPLDPNVHQAIAMVESDDVAPGNVLGIMQKGYTLNGRTIRAAMVTVAKAKA</sequence>
<name>GRPE_ECOLU</name>
<organism>
    <name type="scientific">Escherichia coli O17:K52:H18 (strain UMN026 / ExPEC)</name>
    <dbReference type="NCBI Taxonomy" id="585056"/>
    <lineage>
        <taxon>Bacteria</taxon>
        <taxon>Pseudomonadati</taxon>
        <taxon>Pseudomonadota</taxon>
        <taxon>Gammaproteobacteria</taxon>
        <taxon>Enterobacterales</taxon>
        <taxon>Enterobacteriaceae</taxon>
        <taxon>Escherichia</taxon>
    </lineage>
</organism>
<proteinExistence type="inferred from homology"/>
<dbReference type="EMBL" id="CU928163">
    <property type="protein sequence ID" value="CAR14109.1"/>
    <property type="molecule type" value="Genomic_DNA"/>
</dbReference>
<dbReference type="RefSeq" id="WP_001296310.1">
    <property type="nucleotide sequence ID" value="NC_011751.1"/>
</dbReference>
<dbReference type="RefSeq" id="YP_002413633.1">
    <property type="nucleotide sequence ID" value="NC_011751.1"/>
</dbReference>
<dbReference type="SMR" id="B7N6J9"/>
<dbReference type="STRING" id="585056.ECUMN_2938"/>
<dbReference type="GeneID" id="93774463"/>
<dbReference type="KEGG" id="eum:ECUMN_2938"/>
<dbReference type="PATRIC" id="fig|585056.7.peg.3119"/>
<dbReference type="HOGENOM" id="CLU_057217_6_0_6"/>
<dbReference type="Proteomes" id="UP000007097">
    <property type="component" value="Chromosome"/>
</dbReference>
<dbReference type="GO" id="GO:0005829">
    <property type="term" value="C:cytosol"/>
    <property type="evidence" value="ECO:0007669"/>
    <property type="project" value="TreeGrafter"/>
</dbReference>
<dbReference type="GO" id="GO:0000774">
    <property type="term" value="F:adenyl-nucleotide exchange factor activity"/>
    <property type="evidence" value="ECO:0007669"/>
    <property type="project" value="InterPro"/>
</dbReference>
<dbReference type="GO" id="GO:0042803">
    <property type="term" value="F:protein homodimerization activity"/>
    <property type="evidence" value="ECO:0007669"/>
    <property type="project" value="InterPro"/>
</dbReference>
<dbReference type="GO" id="GO:0051087">
    <property type="term" value="F:protein-folding chaperone binding"/>
    <property type="evidence" value="ECO:0007669"/>
    <property type="project" value="InterPro"/>
</dbReference>
<dbReference type="GO" id="GO:0051082">
    <property type="term" value="F:unfolded protein binding"/>
    <property type="evidence" value="ECO:0007669"/>
    <property type="project" value="TreeGrafter"/>
</dbReference>
<dbReference type="GO" id="GO:0006457">
    <property type="term" value="P:protein folding"/>
    <property type="evidence" value="ECO:0007669"/>
    <property type="project" value="InterPro"/>
</dbReference>
<dbReference type="CDD" id="cd00446">
    <property type="entry name" value="GrpE"/>
    <property type="match status" value="1"/>
</dbReference>
<dbReference type="FunFam" id="2.30.22.10:FF:000001">
    <property type="entry name" value="Protein GrpE"/>
    <property type="match status" value="1"/>
</dbReference>
<dbReference type="FunFam" id="3.90.20.20:FF:000001">
    <property type="entry name" value="Protein GrpE"/>
    <property type="match status" value="1"/>
</dbReference>
<dbReference type="Gene3D" id="3.90.20.20">
    <property type="match status" value="1"/>
</dbReference>
<dbReference type="Gene3D" id="2.30.22.10">
    <property type="entry name" value="Head domain of nucleotide exchange factor GrpE"/>
    <property type="match status" value="1"/>
</dbReference>
<dbReference type="HAMAP" id="MF_01151">
    <property type="entry name" value="GrpE"/>
    <property type="match status" value="1"/>
</dbReference>
<dbReference type="InterPro" id="IPR000740">
    <property type="entry name" value="GrpE"/>
</dbReference>
<dbReference type="InterPro" id="IPR013805">
    <property type="entry name" value="GrpE_coiled_coil"/>
</dbReference>
<dbReference type="InterPro" id="IPR009012">
    <property type="entry name" value="GrpE_head"/>
</dbReference>
<dbReference type="NCBIfam" id="NF007655">
    <property type="entry name" value="PRK10325.1"/>
    <property type="match status" value="1"/>
</dbReference>
<dbReference type="NCBIfam" id="NF010738">
    <property type="entry name" value="PRK14140.1"/>
    <property type="match status" value="1"/>
</dbReference>
<dbReference type="NCBIfam" id="NF010748">
    <property type="entry name" value="PRK14150.1"/>
    <property type="match status" value="1"/>
</dbReference>
<dbReference type="PANTHER" id="PTHR21237">
    <property type="entry name" value="GRPE PROTEIN"/>
    <property type="match status" value="1"/>
</dbReference>
<dbReference type="PANTHER" id="PTHR21237:SF23">
    <property type="entry name" value="GRPE PROTEIN HOMOLOG, MITOCHONDRIAL"/>
    <property type="match status" value="1"/>
</dbReference>
<dbReference type="Pfam" id="PF01025">
    <property type="entry name" value="GrpE"/>
    <property type="match status" value="1"/>
</dbReference>
<dbReference type="PRINTS" id="PR00773">
    <property type="entry name" value="GRPEPROTEIN"/>
</dbReference>
<dbReference type="SUPFAM" id="SSF58014">
    <property type="entry name" value="Coiled-coil domain of nucleotide exchange factor GrpE"/>
    <property type="match status" value="1"/>
</dbReference>
<dbReference type="SUPFAM" id="SSF51064">
    <property type="entry name" value="Head domain of nucleotide exchange factor GrpE"/>
    <property type="match status" value="1"/>
</dbReference>
<dbReference type="PROSITE" id="PS01071">
    <property type="entry name" value="GRPE"/>
    <property type="match status" value="1"/>
</dbReference>
<evidence type="ECO:0000255" key="1">
    <source>
        <dbReference type="HAMAP-Rule" id="MF_01151"/>
    </source>
</evidence>
<evidence type="ECO:0000256" key="2">
    <source>
        <dbReference type="SAM" id="MobiDB-lite"/>
    </source>
</evidence>
<comment type="function">
    <text evidence="1">Participates actively in the response to hyperosmotic and heat shock by preventing the aggregation of stress-denatured proteins, in association with DnaK and GrpE. It is the nucleotide exchange factor for DnaK and may function as a thermosensor. Unfolded proteins bind initially to DnaJ; upon interaction with the DnaJ-bound protein, DnaK hydrolyzes its bound ATP, resulting in the formation of a stable complex. GrpE releases ADP from DnaK; ATP binding to DnaK triggers the release of the substrate protein, thus completing the reaction cycle. Several rounds of ATP-dependent interactions between DnaJ, DnaK and GrpE are required for fully efficient folding.</text>
</comment>
<comment type="subunit">
    <text evidence="1">Homodimer.</text>
</comment>
<comment type="subcellular location">
    <subcellularLocation>
        <location evidence="1">Cytoplasm</location>
    </subcellularLocation>
</comment>
<comment type="similarity">
    <text evidence="1">Belongs to the GrpE family.</text>
</comment>
<accession>B7N6J9</accession>
<keyword id="KW-0143">Chaperone</keyword>
<keyword id="KW-0963">Cytoplasm</keyword>
<keyword id="KW-0346">Stress response</keyword>
<feature type="chain" id="PRO_1000137565" description="Protein GrpE">
    <location>
        <begin position="1"/>
        <end position="197"/>
    </location>
</feature>
<feature type="region of interest" description="Disordered" evidence="2">
    <location>
        <begin position="1"/>
        <end position="39"/>
    </location>
</feature>
<protein>
    <recommendedName>
        <fullName evidence="1">Protein GrpE</fullName>
    </recommendedName>
    <alternativeName>
        <fullName evidence="1">HSP-70 cofactor</fullName>
    </alternativeName>
</protein>
<gene>
    <name evidence="1" type="primary">grpE</name>
    <name type="ordered locus">ECUMN_2938</name>
</gene>